<proteinExistence type="inferred from homology"/>
<reference key="1">
    <citation type="journal article" date="2003" name="Mol. Microbiol.">
        <title>Genome-based analysis of virulence genes in a non-biofilm-forming Staphylococcus epidermidis strain (ATCC 12228).</title>
        <authorList>
            <person name="Zhang Y.-Q."/>
            <person name="Ren S.-X."/>
            <person name="Li H.-L."/>
            <person name="Wang Y.-X."/>
            <person name="Fu G."/>
            <person name="Yang J."/>
            <person name="Qin Z.-Q."/>
            <person name="Miao Y.-G."/>
            <person name="Wang W.-Y."/>
            <person name="Chen R.-S."/>
            <person name="Shen Y."/>
            <person name="Chen Z."/>
            <person name="Yuan Z.-H."/>
            <person name="Zhao G.-P."/>
            <person name="Qu D."/>
            <person name="Danchin A."/>
            <person name="Wen Y.-M."/>
        </authorList>
    </citation>
    <scope>NUCLEOTIDE SEQUENCE [LARGE SCALE GENOMIC DNA]</scope>
    <source>
        <strain>ATCC 12228 / FDA PCI 1200</strain>
    </source>
</reference>
<accession>Q8CMY5</accession>
<sequence length="296" mass="33052">MNKEQLEKMTHGKGFIAALDQSGGSTPKALKEYGVNEDQYSNEDEMFQLVHDMRTRVVTSPSFSPDKILGAILFEQTMDREVEGKYTGDYLADKGVVPFLKVDKGLAEEKNGVQLMKPIDDLDETLDRANERHIFGTKMRSNILELNEQGIKDVVEQQFEFAKKIIAKGLVPIIEPEVNINAKDKSEIEKVLKAEIKKGLDSLNDDQLVMLKLTIPTEANLYKDLADHPNVVRVVVLSGGYSRDEANKLLKDNDELIASFSRALASDLRASQSQEEFDKALGDAVDSIYDASVNKN</sequence>
<protein>
    <recommendedName>
        <fullName>Fructose-bisphosphate aldolase class 1</fullName>
        <ecNumber>4.1.2.13</ecNumber>
    </recommendedName>
    <alternativeName>
        <fullName>Fructose-bisphosphate aldolase class I</fullName>
        <shortName>FBP aldolase</shortName>
    </alternativeName>
</protein>
<name>ALF1_STAES</name>
<keyword id="KW-0324">Glycolysis</keyword>
<keyword id="KW-0456">Lyase</keyword>
<keyword id="KW-0704">Schiff base</keyword>
<evidence type="ECO:0000250" key="1"/>
<evidence type="ECO:0000305" key="2"/>
<dbReference type="EC" id="4.1.2.13"/>
<dbReference type="EMBL" id="AE015929">
    <property type="protein sequence ID" value="AAO05798.1"/>
    <property type="molecule type" value="Genomic_DNA"/>
</dbReference>
<dbReference type="RefSeq" id="NP_765711.1">
    <property type="nucleotide sequence ID" value="NC_004461.1"/>
</dbReference>
<dbReference type="RefSeq" id="WP_001830665.1">
    <property type="nucleotide sequence ID" value="NZ_WBME01000005.1"/>
</dbReference>
<dbReference type="SMR" id="Q8CMY5"/>
<dbReference type="KEGG" id="sep:SE_2156"/>
<dbReference type="PATRIC" id="fig|176280.10.peg.2106"/>
<dbReference type="eggNOG" id="COG3588">
    <property type="taxonomic scope" value="Bacteria"/>
</dbReference>
<dbReference type="HOGENOM" id="CLU_081560_0_0_9"/>
<dbReference type="OrthoDB" id="9813469at2"/>
<dbReference type="UniPathway" id="UPA00109">
    <property type="reaction ID" value="UER00183"/>
</dbReference>
<dbReference type="Proteomes" id="UP000001411">
    <property type="component" value="Chromosome"/>
</dbReference>
<dbReference type="GO" id="GO:0004332">
    <property type="term" value="F:fructose-bisphosphate aldolase activity"/>
    <property type="evidence" value="ECO:0007669"/>
    <property type="project" value="UniProtKB-UniRule"/>
</dbReference>
<dbReference type="GO" id="GO:0006096">
    <property type="term" value="P:glycolytic process"/>
    <property type="evidence" value="ECO:0007669"/>
    <property type="project" value="UniProtKB-UniRule"/>
</dbReference>
<dbReference type="Gene3D" id="3.20.20.70">
    <property type="entry name" value="Aldolase class I"/>
    <property type="match status" value="1"/>
</dbReference>
<dbReference type="HAMAP" id="MF_00729">
    <property type="entry name" value="FBP_aldolase_1"/>
    <property type="match status" value="1"/>
</dbReference>
<dbReference type="InterPro" id="IPR013785">
    <property type="entry name" value="Aldolase_TIM"/>
</dbReference>
<dbReference type="InterPro" id="IPR000741">
    <property type="entry name" value="FBA_I"/>
</dbReference>
<dbReference type="InterPro" id="IPR023014">
    <property type="entry name" value="FBA_I_Gram+-type"/>
</dbReference>
<dbReference type="NCBIfam" id="NF003784">
    <property type="entry name" value="PRK05377.1"/>
    <property type="match status" value="1"/>
</dbReference>
<dbReference type="PANTHER" id="PTHR11627">
    <property type="entry name" value="FRUCTOSE-BISPHOSPHATE ALDOLASE"/>
    <property type="match status" value="1"/>
</dbReference>
<dbReference type="Pfam" id="PF00274">
    <property type="entry name" value="Glycolytic"/>
    <property type="match status" value="1"/>
</dbReference>
<dbReference type="SUPFAM" id="SSF51569">
    <property type="entry name" value="Aldolase"/>
    <property type="match status" value="1"/>
</dbReference>
<feature type="initiator methionine" description="Removed" evidence="1">
    <location>
        <position position="1"/>
    </location>
</feature>
<feature type="chain" id="PRO_0000216910" description="Fructose-bisphosphate aldolase class 1">
    <location>
        <begin position="2"/>
        <end position="296"/>
    </location>
</feature>
<feature type="active site" description="Proton acceptor" evidence="1">
    <location>
        <position position="175"/>
    </location>
</feature>
<feature type="active site" description="Schiff-base intermediate with dihydroxyacetone-P" evidence="1">
    <location>
        <position position="212"/>
    </location>
</feature>
<gene>
    <name type="primary">fda</name>
    <name type="ordered locus">SE_2156</name>
</gene>
<comment type="catalytic activity">
    <reaction>
        <text>beta-D-fructose 1,6-bisphosphate = D-glyceraldehyde 3-phosphate + dihydroxyacetone phosphate</text>
        <dbReference type="Rhea" id="RHEA:14729"/>
        <dbReference type="ChEBI" id="CHEBI:32966"/>
        <dbReference type="ChEBI" id="CHEBI:57642"/>
        <dbReference type="ChEBI" id="CHEBI:59776"/>
        <dbReference type="EC" id="4.1.2.13"/>
    </reaction>
</comment>
<comment type="pathway">
    <text>Carbohydrate degradation; glycolysis; D-glyceraldehyde 3-phosphate and glycerone phosphate from D-glucose: step 4/4.</text>
</comment>
<comment type="similarity">
    <text evidence="2">Belongs to the class I fructose-bisphosphate aldolase family.</text>
</comment>
<organism>
    <name type="scientific">Staphylococcus epidermidis (strain ATCC 12228 / FDA PCI 1200)</name>
    <dbReference type="NCBI Taxonomy" id="176280"/>
    <lineage>
        <taxon>Bacteria</taxon>
        <taxon>Bacillati</taxon>
        <taxon>Bacillota</taxon>
        <taxon>Bacilli</taxon>
        <taxon>Bacillales</taxon>
        <taxon>Staphylococcaceae</taxon>
        <taxon>Staphylococcus</taxon>
    </lineage>
</organism>